<feature type="signal peptide" evidence="4">
    <location>
        <begin position="1"/>
        <end position="17"/>
    </location>
</feature>
<feature type="chain" id="PRO_0000028572" description="Angiotensin-converting enzyme 2">
    <location>
        <begin position="18"/>
        <end position="805"/>
    </location>
</feature>
<feature type="chain" id="PRO_0000292270" description="Processed angiotensin-converting enzyme 2">
    <location>
        <begin position="18"/>
        <end position="708"/>
    </location>
</feature>
<feature type="topological domain" description="Extracellular" evidence="4">
    <location>
        <begin position="18"/>
        <end position="740"/>
    </location>
</feature>
<feature type="transmembrane region" description="Helical" evidence="5">
    <location>
        <begin position="741"/>
        <end position="761"/>
    </location>
</feature>
<feature type="topological domain" description="Cytoplasmic" evidence="4">
    <location>
        <begin position="762"/>
        <end position="805"/>
    </location>
</feature>
<feature type="domain" description="Peptidase M2" evidence="6">
    <location>
        <begin position="19"/>
        <end position="607"/>
    </location>
</feature>
<feature type="domain" description="Collectrin-like" evidence="5">
    <location>
        <begin position="614"/>
        <end position="805"/>
    </location>
</feature>
<feature type="region of interest" description="Interaction with SARS S protein">
    <location>
        <begin position="30"/>
        <end position="41"/>
    </location>
</feature>
<feature type="region of interest" description="Interaction with SARS S protein" evidence="1">
    <location>
        <begin position="82"/>
        <end position="84"/>
    </location>
</feature>
<feature type="region of interest" description="Interaction with SARS S protein">
    <location>
        <begin position="90"/>
        <end position="93"/>
    </location>
</feature>
<feature type="region of interest" description="Interaction with SARS S protein" evidence="1">
    <location>
        <begin position="353"/>
        <end position="357"/>
    </location>
</feature>
<feature type="region of interest" description="Essential for cleavage by ADAM17" evidence="1">
    <location>
        <begin position="652"/>
        <end position="659"/>
    </location>
</feature>
<feature type="region of interest" description="Essential for cleavage by TMPRSS11D and TMPRSS2" evidence="1">
    <location>
        <begin position="697"/>
        <end position="716"/>
    </location>
</feature>
<feature type="region of interest" description="Disordered" evidence="7">
    <location>
        <begin position="771"/>
        <end position="805"/>
    </location>
</feature>
<feature type="short sequence motif" description="LIR" evidence="3">
    <location>
        <begin position="778"/>
        <end position="786"/>
    </location>
</feature>
<feature type="short sequence motif" description="SH2-binding" evidence="3">
    <location>
        <begin position="781"/>
        <end position="785"/>
    </location>
</feature>
<feature type="short sequence motif" description="Endocytic sorting signal" evidence="3">
    <location>
        <begin position="781"/>
        <end position="784"/>
    </location>
</feature>
<feature type="short sequence motif" description="PTB" evidence="3">
    <location>
        <begin position="792"/>
        <end position="795"/>
    </location>
</feature>
<feature type="short sequence motif" description="PDZ-binding" evidence="3">
    <location>
        <begin position="803"/>
        <end position="805"/>
    </location>
</feature>
<feature type="active site" description="Proton acceptor" evidence="6">
    <location>
        <position position="375"/>
    </location>
</feature>
<feature type="active site" description="Proton donor" evidence="6">
    <location>
        <position position="505"/>
    </location>
</feature>
<feature type="binding site" evidence="6 9">
    <location>
        <position position="169"/>
    </location>
    <ligand>
        <name>chloride</name>
        <dbReference type="ChEBI" id="CHEBI:17996"/>
    </ligand>
</feature>
<feature type="binding site" evidence="3">
    <location>
        <position position="273"/>
    </location>
    <ligand>
        <name>substrate</name>
    </ligand>
</feature>
<feature type="binding site" evidence="3">
    <location>
        <begin position="345"/>
        <end position="346"/>
    </location>
    <ligand>
        <name>substrate</name>
    </ligand>
</feature>
<feature type="binding site" evidence="6 9">
    <location>
        <position position="374"/>
    </location>
    <ligand>
        <name>Zn(2+)</name>
        <dbReference type="ChEBI" id="CHEBI:29105"/>
        <note>catalytic</note>
    </ligand>
</feature>
<feature type="binding site" evidence="6 9">
    <location>
        <position position="378"/>
    </location>
    <ligand>
        <name>Zn(2+)</name>
        <dbReference type="ChEBI" id="CHEBI:29105"/>
        <note>catalytic</note>
    </ligand>
</feature>
<feature type="binding site" evidence="6 9">
    <location>
        <position position="402"/>
    </location>
    <ligand>
        <name>Zn(2+)</name>
        <dbReference type="ChEBI" id="CHEBI:29105"/>
        <note>catalytic</note>
    </ligand>
</feature>
<feature type="binding site" evidence="6 9">
    <location>
        <position position="477"/>
    </location>
    <ligand>
        <name>chloride</name>
        <dbReference type="ChEBI" id="CHEBI:17996"/>
    </ligand>
</feature>
<feature type="binding site" evidence="6">
    <location>
        <position position="481"/>
    </location>
    <ligand>
        <name>chloride</name>
        <dbReference type="ChEBI" id="CHEBI:17996"/>
    </ligand>
</feature>
<feature type="binding site" evidence="3">
    <location>
        <position position="515"/>
    </location>
    <ligand>
        <name>substrate</name>
    </ligand>
</feature>
<feature type="modified residue" description="Phosphotyrosine" evidence="3">
    <location>
        <position position="781"/>
    </location>
</feature>
<feature type="modified residue" description="Phosphoserine" evidence="3">
    <location>
        <position position="783"/>
    </location>
</feature>
<feature type="glycosylation site" description="N-linked (GlcNAc...) asparagine" evidence="4">
    <location>
        <position position="53"/>
    </location>
</feature>
<feature type="glycosylation site" description="N-linked (GlcNAc...) asparagine" evidence="4">
    <location>
        <position position="216"/>
    </location>
</feature>
<feature type="glycosylation site" description="N-linked (GlcNAc...) asparagine" evidence="4">
    <location>
        <position position="322"/>
    </location>
</feature>
<feature type="glycosylation site" description="N-linked (GlcNAc...) asparagine" evidence="4">
    <location>
        <position position="546"/>
    </location>
</feature>
<feature type="glycosylation site" description="N-linked (GlcNAc...) asparagine" evidence="4">
    <location>
        <position position="660"/>
    </location>
</feature>
<feature type="glycosylation site" description="N-linked (GlcNAc...) asparagine" evidence="4">
    <location>
        <position position="690"/>
    </location>
</feature>
<feature type="disulfide bond" evidence="6 9">
    <location>
        <begin position="133"/>
        <end position="141"/>
    </location>
</feature>
<feature type="disulfide bond" evidence="6 9">
    <location>
        <begin position="344"/>
        <end position="361"/>
    </location>
</feature>
<feature type="disulfide bond" evidence="6 9">
    <location>
        <begin position="530"/>
        <end position="542"/>
    </location>
</feature>
<feature type="helix" evidence="14">
    <location>
        <begin position="21"/>
        <end position="52"/>
    </location>
</feature>
<feature type="helix" evidence="15">
    <location>
        <begin position="56"/>
        <end position="81"/>
    </location>
</feature>
<feature type="helix" evidence="15">
    <location>
        <begin position="85"/>
        <end position="87"/>
    </location>
</feature>
<feature type="helix" evidence="15">
    <location>
        <begin position="91"/>
        <end position="101"/>
    </location>
</feature>
<feature type="helix" evidence="15">
    <location>
        <begin position="104"/>
        <end position="107"/>
    </location>
</feature>
<feature type="helix" evidence="15">
    <location>
        <begin position="110"/>
        <end position="129"/>
    </location>
</feature>
<feature type="strand" evidence="15">
    <location>
        <begin position="131"/>
        <end position="133"/>
    </location>
</feature>
<feature type="strand" evidence="15">
    <location>
        <begin position="141"/>
        <end position="143"/>
    </location>
</feature>
<feature type="turn" evidence="15">
    <location>
        <begin position="144"/>
        <end position="146"/>
    </location>
</feature>
<feature type="helix" evidence="15">
    <location>
        <begin position="147"/>
        <end position="154"/>
    </location>
</feature>
<feature type="helix" evidence="15">
    <location>
        <begin position="158"/>
        <end position="171"/>
    </location>
</feature>
<feature type="helix" evidence="15">
    <location>
        <begin position="173"/>
        <end position="192"/>
    </location>
</feature>
<feature type="turn" evidence="15">
    <location>
        <begin position="193"/>
        <end position="195"/>
    </location>
</feature>
<feature type="helix" evidence="15">
    <location>
        <begin position="199"/>
        <end position="204"/>
    </location>
</feature>
<feature type="turn" evidence="15">
    <location>
        <begin position="205"/>
        <end position="207"/>
    </location>
</feature>
<feature type="helix" evidence="15">
    <location>
        <begin position="219"/>
        <end position="250"/>
    </location>
</feature>
<feature type="helix" evidence="15">
    <location>
        <begin position="253"/>
        <end position="255"/>
    </location>
</feature>
<feature type="strand" evidence="15">
    <location>
        <begin position="258"/>
        <end position="260"/>
    </location>
</feature>
<feature type="helix" evidence="15">
    <location>
        <begin position="264"/>
        <end position="266"/>
    </location>
</feature>
<feature type="strand" evidence="15">
    <location>
        <begin position="267"/>
        <end position="269"/>
    </location>
</feature>
<feature type="helix" evidence="15">
    <location>
        <begin position="275"/>
        <end position="278"/>
    </location>
</feature>
<feature type="helix" evidence="15">
    <location>
        <begin position="279"/>
        <end position="282"/>
    </location>
</feature>
<feature type="turn" evidence="15">
    <location>
        <begin position="284"/>
        <end position="287"/>
    </location>
</feature>
<feature type="helix" evidence="15">
    <location>
        <begin position="294"/>
        <end position="298"/>
    </location>
</feature>
<feature type="turn" evidence="15">
    <location>
        <begin position="299"/>
        <end position="301"/>
    </location>
</feature>
<feature type="helix" evidence="15">
    <location>
        <begin position="304"/>
        <end position="317"/>
    </location>
</feature>
<feature type="helix" evidence="15">
    <location>
        <begin position="325"/>
        <end position="328"/>
    </location>
</feature>
<feature type="strand" evidence="15">
    <location>
        <begin position="347"/>
        <end position="352"/>
    </location>
</feature>
<feature type="strand" evidence="15">
    <location>
        <begin position="355"/>
        <end position="359"/>
    </location>
</feature>
<feature type="helix" evidence="15">
    <location>
        <begin position="366"/>
        <end position="384"/>
    </location>
</feature>
<feature type="turn" evidence="15">
    <location>
        <begin position="385"/>
        <end position="387"/>
    </location>
</feature>
<feature type="helix" evidence="15">
    <location>
        <begin position="390"/>
        <end position="392"/>
    </location>
</feature>
<feature type="helix" evidence="15">
    <location>
        <begin position="400"/>
        <end position="413"/>
    </location>
</feature>
<feature type="helix" evidence="15">
    <location>
        <begin position="415"/>
        <end position="420"/>
    </location>
</feature>
<feature type="helix" evidence="15">
    <location>
        <begin position="432"/>
        <end position="464"/>
    </location>
</feature>
<feature type="helix" evidence="15">
    <location>
        <begin position="470"/>
        <end position="472"/>
    </location>
</feature>
<feature type="helix" evidence="15">
    <location>
        <begin position="473"/>
        <end position="485"/>
    </location>
</feature>
<feature type="helix" evidence="15">
    <location>
        <begin position="499"/>
        <end position="502"/>
    </location>
</feature>
<feature type="helix" evidence="15">
    <location>
        <begin position="504"/>
        <end position="507"/>
    </location>
</feature>
<feature type="helix" evidence="15">
    <location>
        <begin position="513"/>
        <end position="532"/>
    </location>
</feature>
<feature type="helix" evidence="15">
    <location>
        <begin position="539"/>
        <end position="541"/>
    </location>
</feature>
<feature type="helix" evidence="15">
    <location>
        <begin position="548"/>
        <end position="558"/>
    </location>
</feature>
<feature type="turn" evidence="15">
    <location>
        <begin position="559"/>
        <end position="562"/>
    </location>
</feature>
<feature type="helix" evidence="15">
    <location>
        <begin position="566"/>
        <end position="574"/>
    </location>
</feature>
<feature type="helix" evidence="15">
    <location>
        <begin position="582"/>
        <end position="598"/>
    </location>
</feature>
<feature type="turn" evidence="15">
    <location>
        <begin position="599"/>
        <end position="601"/>
    </location>
</feature>
<comment type="function">
    <text evidence="3">Essential counter-regulatory carboxypeptidase of the renin-angiotensin hormone system that is a critical regulator of blood volume, systemic vascular resistance, and thus cardiovascular homeostasis. Converts angiotensin I to angiotensin 1-9, a nine-amino acid peptide with anti-hypertrophic effects in cardiomyocytes, and angiotensin II to angiotensin 1-7, which then acts as a beneficial vasodilator and anti-proliferation agent, counterbalancing the actions of the vasoconstrictor angiotensin II. Also removes the C-terminal residue from three other vasoactive peptides, neurotensin, kinetensin, and des-Arg bradykinin, but is not active on bradykinin. Also cleaves other biological peptides, such as apelins, casomorphins and dynorphin A. Plays an important role in amino acid transport by acting as binding partner of amino acid transporter SLC6A19 in intestine, regulating trafficking, expression on the cell surface, and its catalytic activity.</text>
</comment>
<comment type="function">
    <text evidence="8">(Microbial infection) Acts as a receptor for human coronavirus SARS.</text>
</comment>
<comment type="catalytic activity">
    <reaction evidence="3">
        <text>angiotensin II + H2O = angiotensin-(1-7) + L-phenylalanine</text>
        <dbReference type="Rhea" id="RHEA:26554"/>
        <dbReference type="ChEBI" id="CHEBI:15377"/>
        <dbReference type="ChEBI" id="CHEBI:58095"/>
        <dbReference type="ChEBI" id="CHEBI:58506"/>
        <dbReference type="ChEBI" id="CHEBI:58922"/>
        <dbReference type="EC" id="3.4.17.23"/>
    </reaction>
    <physiologicalReaction direction="left-to-right" evidence="3">
        <dbReference type="Rhea" id="RHEA:26555"/>
    </physiologicalReaction>
</comment>
<comment type="catalytic activity">
    <reaction evidence="3">
        <text>angiotensin I + H2O = angiotensin-(1-9) + L-leucine</text>
        <dbReference type="Rhea" id="RHEA:63532"/>
        <dbReference type="ChEBI" id="CHEBI:15377"/>
        <dbReference type="ChEBI" id="CHEBI:57427"/>
        <dbReference type="ChEBI" id="CHEBI:147350"/>
        <dbReference type="ChEBI" id="CHEBI:147351"/>
    </reaction>
    <physiologicalReaction direction="left-to-right" evidence="3">
        <dbReference type="Rhea" id="RHEA:63533"/>
    </physiologicalReaction>
</comment>
<comment type="cofactor">
    <cofactor evidence="11">
        <name>Zn(2+)</name>
        <dbReference type="ChEBI" id="CHEBI:29105"/>
    </cofactor>
    <text evidence="9">Binds 1 zinc ion per subunit.</text>
</comment>
<comment type="cofactor">
    <cofactor>
        <name>chloride</name>
        <dbReference type="ChEBI" id="CHEBI:17996"/>
    </cofactor>
    <text>Binds 1 Cl(-) ion per subunit.</text>
</comment>
<comment type="subunit">
    <text evidence="2 3">Homodimer. Interacts with the catalytically active form of TMPRSS2 (By similarity). Interacts with SLC6A19; this interaction is essential for expression and function of SLC6A19 in intestine (By similarity). Interacts with ITGA5:ITGB1 (By similarity). Probably interacts (via endocytic sorting signal motif) with AP2M1; the interaction is inhibited by phosphorylation of Tyr-781 (By similarity). Interacts (via PDZ-binding motif) with NHERF1 (via PDZ domains); the interaction may enhance ACE2 membrane residence (By similarity).</text>
</comment>
<comment type="subunit">
    <text evidence="8">(Microbial infection) Interacts with SARS-CoV S protein.</text>
</comment>
<comment type="interaction">
    <interactant intactId="EBI-25498790">
        <id>Q56NL1</id>
    </interactant>
    <interactant intactId="EBI-15582614">
        <id>P59594</id>
        <label>S</label>
    </interactant>
    <organismsDiffer>true</organismsDiffer>
    <experiments>4</experiments>
</comment>
<comment type="subcellular location">
    <molecule>Processed angiotensin-converting enzyme 2</molecule>
    <subcellularLocation>
        <location evidence="1">Secreted</location>
    </subcellularLocation>
</comment>
<comment type="subcellular location">
    <subcellularLocation>
        <location evidence="3">Cell membrane</location>
        <topology evidence="4">Single-pass type I membrane protein</topology>
    </subcellularLocation>
    <subcellularLocation>
        <location evidence="2">Cytoplasm</location>
    </subcellularLocation>
    <subcellularLocation>
        <location evidence="3">Cell projection</location>
        <location evidence="3">Cilium</location>
    </subcellularLocation>
    <subcellularLocation>
        <location evidence="3">Apical cell membrane</location>
    </subcellularLocation>
    <text evidence="2">Detected in both cell membrane and cytoplasm in neurons.</text>
</comment>
<comment type="domain">
    <text evidence="3">The cytoplasmic tail contains several linear motifs such as LIR, PDZ-binding, PTB and endocytic sorting signal motifs that would allow interaction with proteins that mediate endocytic trafficking and autophagy.</text>
</comment>
<comment type="PTM">
    <text evidence="1">Proteolytic cleavage by ADAM17 generates a secreted form. Also cleaved by serine proteases: TMPRSS2, TMPRSS11D and HPN/TMPRSS1 (By similarity).</text>
</comment>
<comment type="PTM">
    <text evidence="3">Phosphorylated. Phosphorylation at Tyr-781 probably inhibits interaction with AP2M1 and enables interactions with proteins containing SH2 domains.</text>
</comment>
<comment type="similarity">
    <text evidence="10">Belongs to the peptidase M2 family.</text>
</comment>
<gene>
    <name type="primary">ACE2</name>
</gene>
<name>ACE2_PAGLA</name>
<sequence length="805" mass="92611">MSGSFWLLLSFAALTAAQSTTEELAKTFLETFNYEAQELSYQSSVASWNYNTNITDENAKNMNEAGAKWSAYYEEQSKLAQTYPLAEIQDAKIKRQLQALQQSGSSVLSADKSQRLNTILNAMSTIYSTGKACNPNNPQECLLLEPGLDNIMENSKDYNERLWAWEGWRAEVGKQLRPLYEEYVALKNEMARANNYEDYGDYWRGDYEEEWTGGYNYSRNQLIQDVEDTFEQIKPLYQHLHAYVRAKLMDTYPSRISRTGCLPAHLLGDMWGRFWTNLYPLTVPFGQKPNIDVTDAMVNQNWDARRIFKEAEKFFVSVGLPNMTQGFWENSMLTEPGDGRKVVCHPTAWDLGKGDFRIKMCTKVTMDDFLTAHHEMGHIQYDMAYAAQPFLLRNGANEGFHEAVGEIMSLSAATPNHLKTIGLLSPAFSEDNETEINFLLKQALTIVGTLPFTYMLEKWRWMVFKGAIPKEQWMQKWWEMKRNIVGVVEPVPHDETYCDPASLFHVANDYSFIRYYTRTIYQFQFQEALCQIAKHEGPLHKCDISNSTEAGKKLLEMLSLGRSEPWTLALERVVGAKNMNVTPLLNYFEPLFTWLKEQNRNSFVGWDTDWRPYSDQSIKVRISLKSALGEKAYEWNDNEMYLFRSSIAYAMREYFSKVKNQTIPFVEDNVWVSDLKPRISFNFFVTFSNNVSDVIPRSEVEDAIRMSRSRINDAFRLDDNSLEFLGIEPTLSPPYRPPVTIWLIVFGVVMGAIVVGIVLLIVSGIRNRRKNDQAGSEENPYASVDLNKGENNPGFQHADDVQTSF</sequence>
<evidence type="ECO:0000250" key="1"/>
<evidence type="ECO:0000250" key="2">
    <source>
        <dbReference type="UniProtKB" id="Q8R0I0"/>
    </source>
</evidence>
<evidence type="ECO:0000250" key="3">
    <source>
        <dbReference type="UniProtKB" id="Q9BYF1"/>
    </source>
</evidence>
<evidence type="ECO:0000255" key="4"/>
<evidence type="ECO:0000255" key="5">
    <source>
        <dbReference type="PROSITE-ProRule" id="PRU01354"/>
    </source>
</evidence>
<evidence type="ECO:0000255" key="6">
    <source>
        <dbReference type="PROSITE-ProRule" id="PRU01355"/>
    </source>
</evidence>
<evidence type="ECO:0000256" key="7">
    <source>
        <dbReference type="SAM" id="MobiDB-lite"/>
    </source>
</evidence>
<evidence type="ECO:0000269" key="8">
    <source>
    </source>
</evidence>
<evidence type="ECO:0000269" key="9">
    <source>
    </source>
</evidence>
<evidence type="ECO:0000305" key="10"/>
<evidence type="ECO:0000305" key="11">
    <source>
    </source>
</evidence>
<evidence type="ECO:0007744" key="12">
    <source>
        <dbReference type="PDB" id="3SCK"/>
    </source>
</evidence>
<evidence type="ECO:0007744" key="13">
    <source>
        <dbReference type="PDB" id="3SCL"/>
    </source>
</evidence>
<evidence type="ECO:0007829" key="14">
    <source>
        <dbReference type="PDB" id="3D0G"/>
    </source>
</evidence>
<evidence type="ECO:0007829" key="15">
    <source>
        <dbReference type="PDB" id="7WSK"/>
    </source>
</evidence>
<proteinExistence type="evidence at protein level"/>
<protein>
    <recommendedName>
        <fullName>Angiotensin-converting enzyme 2</fullName>
        <ecNumber evidence="3">3.4.17.23</ecNumber>
    </recommendedName>
    <alternativeName>
        <fullName>ACE-related carboxypeptidase</fullName>
        <ecNumber evidence="3">3.4.17.-</ecNumber>
    </alternativeName>
    <component>
        <recommendedName>
            <fullName>Processed angiotensin-converting enzyme 2</fullName>
        </recommendedName>
    </component>
</protein>
<reference key="1">
    <citation type="journal article" date="2005" name="EMBO J.">
        <title>Receptor and viral determinants of SARS-coronavirus adaptation to human ACE2.</title>
        <authorList>
            <person name="Li W."/>
            <person name="Zhang C."/>
            <person name="Sui J."/>
            <person name="Kuhn J.H."/>
            <person name="Moore M.J."/>
            <person name="Luo S."/>
            <person name="Wong S.-K."/>
            <person name="Huang I.-C."/>
            <person name="Xu K."/>
            <person name="Vasilieva N."/>
            <person name="Murakami A."/>
            <person name="He Y."/>
            <person name="Marasco W.A."/>
            <person name="Guan Y."/>
            <person name="Choe H."/>
            <person name="Farzan M."/>
        </authorList>
    </citation>
    <scope>NUCLEOTIDE SEQUENCE [MRNA]</scope>
    <scope>INTERACTION WITH SARS-COV S PROTEIN</scope>
</reference>
<reference evidence="12 13" key="2">
    <citation type="journal article" date="2012" name="J. Biol. Chem.">
        <title>Mechanisms of host receptor adaptation by severe acute respiratory syndrome coronavirus.</title>
        <authorList>
            <person name="Wu K."/>
            <person name="Peng G."/>
            <person name="Wilken M."/>
            <person name="Geraghty R.J."/>
            <person name="Li F."/>
        </authorList>
    </citation>
    <scope>X-RAY CRYSTALLOGRAPHY (3.0 ANGSTROMS) OF 19-613 IN COMPLEXES WITH ZINC AND SARS CORONAVIRUS SPIKE GLYCOPROTEIN</scope>
    <scope>COFACTOR</scope>
    <scope>DISULFIDE BONDS</scope>
</reference>
<dbReference type="EC" id="3.4.17.23" evidence="3"/>
<dbReference type="EC" id="3.4.17.-" evidence="3"/>
<dbReference type="EMBL" id="AY881174">
    <property type="protein sequence ID" value="AAX63775.1"/>
    <property type="molecule type" value="mRNA"/>
</dbReference>
<dbReference type="PDB" id="3D0G">
    <property type="method" value="X-ray"/>
    <property type="resolution" value="2.80 A"/>
    <property type="chains" value="A/B=19-55"/>
</dbReference>
<dbReference type="PDB" id="3D0H">
    <property type="method" value="X-ray"/>
    <property type="resolution" value="3.10 A"/>
    <property type="chains" value="A/B=19-55"/>
</dbReference>
<dbReference type="PDB" id="3D0I">
    <property type="method" value="X-ray"/>
    <property type="resolution" value="2.90 A"/>
    <property type="chains" value="A/B=19-55"/>
</dbReference>
<dbReference type="PDB" id="3SCK">
    <property type="method" value="X-ray"/>
    <property type="resolution" value="3.00 A"/>
    <property type="chains" value="A/B=19-82"/>
</dbReference>
<dbReference type="PDB" id="3SCL">
    <property type="method" value="X-ray"/>
    <property type="resolution" value="3.00 A"/>
    <property type="chains" value="A/B=19-82"/>
</dbReference>
<dbReference type="PDB" id="7WSK">
    <property type="method" value="X-ray"/>
    <property type="resolution" value="3.30 A"/>
    <property type="chains" value="A=18-617"/>
</dbReference>
<dbReference type="PDBsum" id="3D0G"/>
<dbReference type="PDBsum" id="3D0H"/>
<dbReference type="PDBsum" id="3D0I"/>
<dbReference type="PDBsum" id="3SCK"/>
<dbReference type="PDBsum" id="3SCL"/>
<dbReference type="PDBsum" id="7WSK"/>
<dbReference type="SMR" id="Q56NL1"/>
<dbReference type="IntAct" id="Q56NL1">
    <property type="interactions" value="2"/>
</dbReference>
<dbReference type="MEROPS" id="M02.006"/>
<dbReference type="GlyCosmos" id="Q56NL1">
    <property type="glycosylation" value="6 sites, No reported glycans"/>
</dbReference>
<dbReference type="BRENDA" id="3.4.17.23">
    <property type="organism ID" value="16967"/>
</dbReference>
<dbReference type="GO" id="GO:0016324">
    <property type="term" value="C:apical plasma membrane"/>
    <property type="evidence" value="ECO:0007669"/>
    <property type="project" value="UniProtKB-SubCell"/>
</dbReference>
<dbReference type="GO" id="GO:0009986">
    <property type="term" value="C:cell surface"/>
    <property type="evidence" value="ECO:0000250"/>
    <property type="project" value="UniProtKB"/>
</dbReference>
<dbReference type="GO" id="GO:0005929">
    <property type="term" value="C:cilium"/>
    <property type="evidence" value="ECO:0007669"/>
    <property type="project" value="UniProtKB-SubCell"/>
</dbReference>
<dbReference type="GO" id="GO:0005737">
    <property type="term" value="C:cytoplasm"/>
    <property type="evidence" value="ECO:0007669"/>
    <property type="project" value="UniProtKB-SubCell"/>
</dbReference>
<dbReference type="GO" id="GO:0005615">
    <property type="term" value="C:extracellular space"/>
    <property type="evidence" value="ECO:0007669"/>
    <property type="project" value="TreeGrafter"/>
</dbReference>
<dbReference type="GO" id="GO:0005886">
    <property type="term" value="C:plasma membrane"/>
    <property type="evidence" value="ECO:0000250"/>
    <property type="project" value="UniProtKB"/>
</dbReference>
<dbReference type="GO" id="GO:0004180">
    <property type="term" value="F:carboxypeptidase activity"/>
    <property type="evidence" value="ECO:0007669"/>
    <property type="project" value="UniProtKB-KW"/>
</dbReference>
<dbReference type="GO" id="GO:0046872">
    <property type="term" value="F:metal ion binding"/>
    <property type="evidence" value="ECO:0007669"/>
    <property type="project" value="UniProtKB-KW"/>
</dbReference>
<dbReference type="GO" id="GO:0008237">
    <property type="term" value="F:metallopeptidase activity"/>
    <property type="evidence" value="ECO:0007669"/>
    <property type="project" value="UniProtKB-KW"/>
</dbReference>
<dbReference type="GO" id="GO:0008241">
    <property type="term" value="F:peptidyl-dipeptidase activity"/>
    <property type="evidence" value="ECO:0007669"/>
    <property type="project" value="InterPro"/>
</dbReference>
<dbReference type="GO" id="GO:0001618">
    <property type="term" value="F:virus receptor activity"/>
    <property type="evidence" value="ECO:0000250"/>
    <property type="project" value="UniProtKB"/>
</dbReference>
<dbReference type="GO" id="GO:0006508">
    <property type="term" value="P:proteolysis"/>
    <property type="evidence" value="ECO:0007669"/>
    <property type="project" value="UniProtKB-KW"/>
</dbReference>
<dbReference type="CDD" id="cd06461">
    <property type="entry name" value="M2_ACE"/>
    <property type="match status" value="1"/>
</dbReference>
<dbReference type="FunFam" id="1.10.1370.30:FF:000001">
    <property type="entry name" value="Angiotensin-converting enzyme"/>
    <property type="match status" value="1"/>
</dbReference>
<dbReference type="Gene3D" id="1.10.1370.30">
    <property type="match status" value="1"/>
</dbReference>
<dbReference type="InterPro" id="IPR031588">
    <property type="entry name" value="Collectrin_dom"/>
</dbReference>
<dbReference type="InterPro" id="IPR001548">
    <property type="entry name" value="Peptidase_M2"/>
</dbReference>
<dbReference type="PANTHER" id="PTHR10514">
    <property type="entry name" value="ANGIOTENSIN-CONVERTING ENZYME"/>
    <property type="match status" value="1"/>
</dbReference>
<dbReference type="PANTHER" id="PTHR10514:SF24">
    <property type="entry name" value="ANGIOTENSIN-CONVERTING ENZYME 2"/>
    <property type="match status" value="1"/>
</dbReference>
<dbReference type="Pfam" id="PF16959">
    <property type="entry name" value="Collectrin"/>
    <property type="match status" value="1"/>
</dbReference>
<dbReference type="Pfam" id="PF01401">
    <property type="entry name" value="Peptidase_M2"/>
    <property type="match status" value="1"/>
</dbReference>
<dbReference type="PRINTS" id="PR00791">
    <property type="entry name" value="PEPDIPTASEA"/>
</dbReference>
<dbReference type="SUPFAM" id="SSF55486">
    <property type="entry name" value="Metalloproteases ('zincins'), catalytic domain"/>
    <property type="match status" value="1"/>
</dbReference>
<dbReference type="PROSITE" id="PS52010">
    <property type="entry name" value="COLLECTRIN_LIKE"/>
    <property type="match status" value="1"/>
</dbReference>
<dbReference type="PROSITE" id="PS52011">
    <property type="entry name" value="PEPTIDASE_M2"/>
    <property type="match status" value="1"/>
</dbReference>
<dbReference type="PROSITE" id="PS00142">
    <property type="entry name" value="ZINC_PROTEASE"/>
    <property type="match status" value="1"/>
</dbReference>
<organism>
    <name type="scientific">Paguma larvata</name>
    <name type="common">Masked palm civet</name>
    <dbReference type="NCBI Taxonomy" id="9675"/>
    <lineage>
        <taxon>Eukaryota</taxon>
        <taxon>Metazoa</taxon>
        <taxon>Chordata</taxon>
        <taxon>Craniata</taxon>
        <taxon>Vertebrata</taxon>
        <taxon>Euteleostomi</taxon>
        <taxon>Mammalia</taxon>
        <taxon>Eutheria</taxon>
        <taxon>Laurasiatheria</taxon>
        <taxon>Carnivora</taxon>
        <taxon>Feliformia</taxon>
        <taxon>Viverridae</taxon>
        <taxon>Paradoxurinae</taxon>
        <taxon>Paguma</taxon>
    </lineage>
</organism>
<keyword id="KW-0002">3D-structure</keyword>
<keyword id="KW-0121">Carboxypeptidase</keyword>
<keyword id="KW-1003">Cell membrane</keyword>
<keyword id="KW-0966">Cell projection</keyword>
<keyword id="KW-0868">Chloride</keyword>
<keyword id="KW-0963">Cytoplasm</keyword>
<keyword id="KW-1015">Disulfide bond</keyword>
<keyword id="KW-0325">Glycoprotein</keyword>
<keyword id="KW-0378">Hydrolase</keyword>
<keyword id="KW-0472">Membrane</keyword>
<keyword id="KW-0479">Metal-binding</keyword>
<keyword id="KW-0482">Metalloprotease</keyword>
<keyword id="KW-0597">Phosphoprotein</keyword>
<keyword id="KW-0645">Protease</keyword>
<keyword id="KW-0964">Secreted</keyword>
<keyword id="KW-0732">Signal</keyword>
<keyword id="KW-0812">Transmembrane</keyword>
<keyword id="KW-1133">Transmembrane helix</keyword>
<keyword id="KW-0862">Zinc</keyword>
<accession>Q56NL1</accession>